<dbReference type="EC" id="1.6.5.9" evidence="1"/>
<dbReference type="EMBL" id="CP000046">
    <property type="protein sequence ID" value="AAW37912.1"/>
    <property type="molecule type" value="Genomic_DNA"/>
</dbReference>
<dbReference type="RefSeq" id="WP_000046076.1">
    <property type="nucleotide sequence ID" value="NZ_JBGOFO010000002.1"/>
</dbReference>
<dbReference type="SMR" id="Q5HHE4"/>
<dbReference type="KEGG" id="sac:SACOL0944"/>
<dbReference type="HOGENOM" id="CLU_021377_7_2_9"/>
<dbReference type="Proteomes" id="UP000000530">
    <property type="component" value="Chromosome"/>
</dbReference>
<dbReference type="GO" id="GO:0005886">
    <property type="term" value="C:plasma membrane"/>
    <property type="evidence" value="ECO:0007669"/>
    <property type="project" value="UniProtKB-SubCell"/>
</dbReference>
<dbReference type="GO" id="GO:0003955">
    <property type="term" value="F:NAD(P)H dehydrogenase (quinone) activity"/>
    <property type="evidence" value="ECO:0007669"/>
    <property type="project" value="TreeGrafter"/>
</dbReference>
<dbReference type="GO" id="GO:0050136">
    <property type="term" value="F:NADH:ubiquinone reductase (non-electrogenic) activity"/>
    <property type="evidence" value="ECO:0007669"/>
    <property type="project" value="UniProtKB-EC"/>
</dbReference>
<dbReference type="GO" id="GO:0019646">
    <property type="term" value="P:aerobic electron transport chain"/>
    <property type="evidence" value="ECO:0007669"/>
    <property type="project" value="TreeGrafter"/>
</dbReference>
<dbReference type="FunFam" id="3.50.50.100:FF:000004">
    <property type="entry name" value="Pyridine nucleotide-disulfide oxidoreductase"/>
    <property type="match status" value="1"/>
</dbReference>
<dbReference type="Gene3D" id="3.50.50.100">
    <property type="match status" value="1"/>
</dbReference>
<dbReference type="InterPro" id="IPR036188">
    <property type="entry name" value="FAD/NAD-bd_sf"/>
</dbReference>
<dbReference type="InterPro" id="IPR023753">
    <property type="entry name" value="FAD/NAD-binding_dom"/>
</dbReference>
<dbReference type="InterPro" id="IPR051169">
    <property type="entry name" value="NADH-Q_oxidoreductase"/>
</dbReference>
<dbReference type="PANTHER" id="PTHR42913:SF3">
    <property type="entry name" value="64 KDA MITOCHONDRIAL NADH DEHYDROGENASE (EUROFUNG)"/>
    <property type="match status" value="1"/>
</dbReference>
<dbReference type="PANTHER" id="PTHR42913">
    <property type="entry name" value="APOPTOSIS-INDUCING FACTOR 1"/>
    <property type="match status" value="1"/>
</dbReference>
<dbReference type="Pfam" id="PF07992">
    <property type="entry name" value="Pyr_redox_2"/>
    <property type="match status" value="1"/>
</dbReference>
<dbReference type="PRINTS" id="PR00368">
    <property type="entry name" value="FADPNR"/>
</dbReference>
<dbReference type="SUPFAM" id="SSF51905">
    <property type="entry name" value="FAD/NAD(P)-binding domain"/>
    <property type="match status" value="2"/>
</dbReference>
<proteinExistence type="inferred from homology"/>
<evidence type="ECO:0000250" key="1">
    <source>
        <dbReference type="UniProtKB" id="Q2FZV7"/>
    </source>
</evidence>
<evidence type="ECO:0000305" key="2"/>
<sequence>MAQDRKKVLVLGAGYAGLQTVTKLQKAISTEEAEITLINKNEYHYEATWLHEASAGTLNYEDVLYPVESVLKKDKVNFVQAEVTKIDRDAKKVETNQGIYDFDILVVALGFVSETFGIEGMKDHAFQIENVITARELSRHIEDKFANYAASKEKDDNDLSILVGGAGFTGVEFLGELTDRIPELCSKYGVDQNKVKITCVEAAPKMLPMFSEELVNHAVSYLEDRGVEFKIATPIVACNEKGFVVEVDGEKQQLNAGTSVWAAGVRGSKLMEESFEGVKRGRIVTKQDLTINGYDNIFVIGDCSAFIPAGEERPLPTTAQIAMQQGESVAKNIKRILNGESTEEFEYVDRGTVCSLGSHDGVGMVFGKPIAGKKAAFMKKVIDTRAVFKIGGIGLAFKKGKF</sequence>
<reference key="1">
    <citation type="journal article" date="2005" name="J. Bacteriol.">
        <title>Insights on evolution of virulence and resistance from the complete genome analysis of an early methicillin-resistant Staphylococcus aureus strain and a biofilm-producing methicillin-resistant Staphylococcus epidermidis strain.</title>
        <authorList>
            <person name="Gill S.R."/>
            <person name="Fouts D.E."/>
            <person name="Archer G.L."/>
            <person name="Mongodin E.F."/>
            <person name="DeBoy R.T."/>
            <person name="Ravel J."/>
            <person name="Paulsen I.T."/>
            <person name="Kolonay J.F."/>
            <person name="Brinkac L.M."/>
            <person name="Beanan M.J."/>
            <person name="Dodson R.J."/>
            <person name="Daugherty S.C."/>
            <person name="Madupu R."/>
            <person name="Angiuoli S.V."/>
            <person name="Durkin A.S."/>
            <person name="Haft D.H."/>
            <person name="Vamathevan J.J."/>
            <person name="Khouri H."/>
            <person name="Utterback T.R."/>
            <person name="Lee C."/>
            <person name="Dimitrov G."/>
            <person name="Jiang L."/>
            <person name="Qin H."/>
            <person name="Weidman J."/>
            <person name="Tran K."/>
            <person name="Kang K.H."/>
            <person name="Hance I.R."/>
            <person name="Nelson K.E."/>
            <person name="Fraser C.M."/>
        </authorList>
    </citation>
    <scope>NUCLEOTIDE SEQUENCE [LARGE SCALE GENOMIC DNA]</scope>
    <source>
        <strain>COL</strain>
    </source>
</reference>
<keyword id="KW-1003">Cell membrane</keyword>
<keyword id="KW-0274">FAD</keyword>
<keyword id="KW-0285">Flavoprotein</keyword>
<keyword id="KW-0472">Membrane</keyword>
<keyword id="KW-0520">NAD</keyword>
<keyword id="KW-0560">Oxidoreductase</keyword>
<gene>
    <name type="ordered locus">SACOL0944</name>
</gene>
<comment type="function">
    <text evidence="1">Alternative, nonproton pumping NADH:quinone oxidoreductase that delivers electrons to the respiratory chain by oxidation of NADH and reduction of quinones, and contributes to the regeneration of NAD(+).</text>
</comment>
<comment type="catalytic activity">
    <reaction evidence="1">
        <text>a quinone + NADH + H(+) = a quinol + NAD(+)</text>
        <dbReference type="Rhea" id="RHEA:46160"/>
        <dbReference type="ChEBI" id="CHEBI:15378"/>
        <dbReference type="ChEBI" id="CHEBI:24646"/>
        <dbReference type="ChEBI" id="CHEBI:57540"/>
        <dbReference type="ChEBI" id="CHEBI:57945"/>
        <dbReference type="ChEBI" id="CHEBI:132124"/>
        <dbReference type="EC" id="1.6.5.9"/>
    </reaction>
</comment>
<comment type="cofactor">
    <cofactor evidence="1">
        <name>FAD</name>
        <dbReference type="ChEBI" id="CHEBI:57692"/>
    </cofactor>
    <text evidence="1">Binds 1 FAD per subunit.</text>
</comment>
<comment type="subcellular location">
    <subcellularLocation>
        <location evidence="1">Cell membrane</location>
    </subcellularLocation>
</comment>
<comment type="similarity">
    <text evidence="2">Belongs to the NADH dehydrogenase family.</text>
</comment>
<organism>
    <name type="scientific">Staphylococcus aureus (strain COL)</name>
    <dbReference type="NCBI Taxonomy" id="93062"/>
    <lineage>
        <taxon>Bacteria</taxon>
        <taxon>Bacillati</taxon>
        <taxon>Bacillota</taxon>
        <taxon>Bacilli</taxon>
        <taxon>Bacillales</taxon>
        <taxon>Staphylococcaceae</taxon>
        <taxon>Staphylococcus</taxon>
    </lineage>
</organism>
<protein>
    <recommendedName>
        <fullName evidence="1">Type II NADH:quinone oxidoreductase</fullName>
        <ecNumber evidence="1">1.6.5.9</ecNumber>
    </recommendedName>
    <alternativeName>
        <fullName evidence="1">NDH-2</fullName>
    </alternativeName>
</protein>
<name>NDH_STAAC</name>
<feature type="chain" id="PRO_0000287365" description="Type II NADH:quinone oxidoreductase">
    <location>
        <begin position="1"/>
        <end position="402"/>
    </location>
</feature>
<feature type="active site" evidence="1">
    <location>
        <position position="172"/>
    </location>
</feature>
<feature type="binding site" evidence="1">
    <location>
        <begin position="12"/>
        <end position="16"/>
    </location>
    <ligand>
        <name>FAD</name>
        <dbReference type="ChEBI" id="CHEBI:57692"/>
    </ligand>
</feature>
<feature type="binding site" evidence="1">
    <location>
        <begin position="39"/>
        <end position="40"/>
    </location>
    <ligand>
        <name>FAD</name>
        <dbReference type="ChEBI" id="CHEBI:57692"/>
    </ligand>
</feature>
<feature type="binding site" evidence="1">
    <location>
        <position position="83"/>
    </location>
    <ligand>
        <name>FAD</name>
        <dbReference type="ChEBI" id="CHEBI:57692"/>
    </ligand>
</feature>
<feature type="binding site" evidence="1">
    <location>
        <position position="302"/>
    </location>
    <ligand>
        <name>FAD</name>
        <dbReference type="ChEBI" id="CHEBI:57692"/>
    </ligand>
</feature>
<feature type="binding site" evidence="1">
    <location>
        <begin position="319"/>
        <end position="320"/>
    </location>
    <ligand>
        <name>FAD</name>
        <dbReference type="ChEBI" id="CHEBI:57692"/>
    </ligand>
</feature>
<feature type="binding site" evidence="1">
    <location>
        <position position="379"/>
    </location>
    <ligand>
        <name>FAD</name>
        <dbReference type="ChEBI" id="CHEBI:57692"/>
    </ligand>
</feature>
<accession>Q5HHE4</accession>